<comment type="function">
    <text evidence="1">This protein is one of the early assembly proteins of the 50S ribosomal subunit, although it is not seen to bind rRNA by itself. It is important during the early stages of 50S assembly.</text>
</comment>
<comment type="subunit">
    <text evidence="1">Part of the 50S ribosomal subunit.</text>
</comment>
<comment type="similarity">
    <text evidence="1">Belongs to the universal ribosomal protein uL13 family.</text>
</comment>
<keyword id="KW-0687">Ribonucleoprotein</keyword>
<keyword id="KW-0689">Ribosomal protein</keyword>
<organism>
    <name type="scientific">Ruthia magnifica subsp. Calyptogena magnifica</name>
    <dbReference type="NCBI Taxonomy" id="413404"/>
    <lineage>
        <taxon>Bacteria</taxon>
        <taxon>Pseudomonadati</taxon>
        <taxon>Pseudomonadota</taxon>
        <taxon>Gammaproteobacteria</taxon>
        <taxon>Candidatus Pseudothioglobaceae</taxon>
        <taxon>Candidatus Ruthturnera</taxon>
    </lineage>
</organism>
<name>RL13_RUTMC</name>
<reference key="1">
    <citation type="journal article" date="2007" name="Science">
        <title>The Calyptogena magnifica chemoautotrophic symbiont genome.</title>
        <authorList>
            <person name="Newton I.L.G."/>
            <person name="Woyke T."/>
            <person name="Auchtung T.A."/>
            <person name="Dilly G.F."/>
            <person name="Dutton R.J."/>
            <person name="Fisher M.C."/>
            <person name="Fontanez K.M."/>
            <person name="Lau E."/>
            <person name="Stewart F.J."/>
            <person name="Richardson P.M."/>
            <person name="Barry K.W."/>
            <person name="Saunders E."/>
            <person name="Detter J.C."/>
            <person name="Wu D."/>
            <person name="Eisen J.A."/>
            <person name="Cavanaugh C.M."/>
        </authorList>
    </citation>
    <scope>NUCLEOTIDE SEQUENCE [LARGE SCALE GENOMIC DNA]</scope>
</reference>
<gene>
    <name evidence="1" type="primary">rplM</name>
    <name type="ordered locus">Rmag_0936</name>
</gene>
<proteinExistence type="inferred from homology"/>
<evidence type="ECO:0000255" key="1">
    <source>
        <dbReference type="HAMAP-Rule" id="MF_01366"/>
    </source>
</evidence>
<evidence type="ECO:0000305" key="2"/>
<dbReference type="EMBL" id="CP000488">
    <property type="protein sequence ID" value="ABL02649.1"/>
    <property type="molecule type" value="Genomic_DNA"/>
</dbReference>
<dbReference type="RefSeq" id="WP_011738274.1">
    <property type="nucleotide sequence ID" value="NC_008610.1"/>
</dbReference>
<dbReference type="SMR" id="A1AXJ2"/>
<dbReference type="STRING" id="413404.Rmag_0936"/>
<dbReference type="KEGG" id="rma:Rmag_0936"/>
<dbReference type="eggNOG" id="COG0102">
    <property type="taxonomic scope" value="Bacteria"/>
</dbReference>
<dbReference type="HOGENOM" id="CLU_082184_2_2_6"/>
<dbReference type="OrthoDB" id="9801330at2"/>
<dbReference type="Proteomes" id="UP000002587">
    <property type="component" value="Chromosome"/>
</dbReference>
<dbReference type="GO" id="GO:0022625">
    <property type="term" value="C:cytosolic large ribosomal subunit"/>
    <property type="evidence" value="ECO:0007669"/>
    <property type="project" value="TreeGrafter"/>
</dbReference>
<dbReference type="GO" id="GO:0003729">
    <property type="term" value="F:mRNA binding"/>
    <property type="evidence" value="ECO:0007669"/>
    <property type="project" value="TreeGrafter"/>
</dbReference>
<dbReference type="GO" id="GO:0003735">
    <property type="term" value="F:structural constituent of ribosome"/>
    <property type="evidence" value="ECO:0007669"/>
    <property type="project" value="InterPro"/>
</dbReference>
<dbReference type="GO" id="GO:0017148">
    <property type="term" value="P:negative regulation of translation"/>
    <property type="evidence" value="ECO:0007669"/>
    <property type="project" value="TreeGrafter"/>
</dbReference>
<dbReference type="GO" id="GO:0006412">
    <property type="term" value="P:translation"/>
    <property type="evidence" value="ECO:0007669"/>
    <property type="project" value="UniProtKB-UniRule"/>
</dbReference>
<dbReference type="CDD" id="cd00392">
    <property type="entry name" value="Ribosomal_L13"/>
    <property type="match status" value="1"/>
</dbReference>
<dbReference type="FunFam" id="3.90.1180.10:FF:000001">
    <property type="entry name" value="50S ribosomal protein L13"/>
    <property type="match status" value="1"/>
</dbReference>
<dbReference type="Gene3D" id="3.90.1180.10">
    <property type="entry name" value="Ribosomal protein L13"/>
    <property type="match status" value="1"/>
</dbReference>
<dbReference type="HAMAP" id="MF_01366">
    <property type="entry name" value="Ribosomal_uL13"/>
    <property type="match status" value="1"/>
</dbReference>
<dbReference type="InterPro" id="IPR005822">
    <property type="entry name" value="Ribosomal_uL13"/>
</dbReference>
<dbReference type="InterPro" id="IPR005823">
    <property type="entry name" value="Ribosomal_uL13_bac-type"/>
</dbReference>
<dbReference type="InterPro" id="IPR023563">
    <property type="entry name" value="Ribosomal_uL13_CS"/>
</dbReference>
<dbReference type="InterPro" id="IPR036899">
    <property type="entry name" value="Ribosomal_uL13_sf"/>
</dbReference>
<dbReference type="NCBIfam" id="TIGR01066">
    <property type="entry name" value="rplM_bact"/>
    <property type="match status" value="1"/>
</dbReference>
<dbReference type="PANTHER" id="PTHR11545:SF2">
    <property type="entry name" value="LARGE RIBOSOMAL SUBUNIT PROTEIN UL13M"/>
    <property type="match status" value="1"/>
</dbReference>
<dbReference type="PANTHER" id="PTHR11545">
    <property type="entry name" value="RIBOSOMAL PROTEIN L13"/>
    <property type="match status" value="1"/>
</dbReference>
<dbReference type="Pfam" id="PF00572">
    <property type="entry name" value="Ribosomal_L13"/>
    <property type="match status" value="1"/>
</dbReference>
<dbReference type="PIRSF" id="PIRSF002181">
    <property type="entry name" value="Ribosomal_L13"/>
    <property type="match status" value="1"/>
</dbReference>
<dbReference type="SUPFAM" id="SSF52161">
    <property type="entry name" value="Ribosomal protein L13"/>
    <property type="match status" value="1"/>
</dbReference>
<dbReference type="PROSITE" id="PS00783">
    <property type="entry name" value="RIBOSOMAL_L13"/>
    <property type="match status" value="1"/>
</dbReference>
<protein>
    <recommendedName>
        <fullName evidence="1">Large ribosomal subunit protein uL13</fullName>
    </recommendedName>
    <alternativeName>
        <fullName evidence="2">50S ribosomal protein L13</fullName>
    </alternativeName>
</protein>
<accession>A1AXJ2</accession>
<sequence>MKTFSAKAHEVKRDWLLVDADGKILGRFATQIASRLRGKHKPEYTPHTDTGDYIVIINASKIKVTGNKFEDKMYHHHTGYVGNLKSIAFKDLQAKKPEEIINKVVKGMLPKGPLGRDMFRKMKVFAGSEHTHGAQQPQVLDI</sequence>
<feature type="chain" id="PRO_1000055464" description="Large ribosomal subunit protein uL13">
    <location>
        <begin position="1"/>
        <end position="142"/>
    </location>
</feature>